<name>PLPP6_BOVIN</name>
<accession>Q58DI5</accession>
<accession>A6QLK7</accession>
<dbReference type="EC" id="3.1.3.-" evidence="2"/>
<dbReference type="EC" id="3.6.1.-" evidence="2"/>
<dbReference type="EC" id="3.6.1.68" evidence="2"/>
<dbReference type="EMBL" id="BT021612">
    <property type="protein sequence ID" value="AAX46459.1"/>
    <property type="molecule type" value="mRNA"/>
</dbReference>
<dbReference type="EMBL" id="BC147999">
    <property type="protein sequence ID" value="AAI48000.1"/>
    <property type="molecule type" value="mRNA"/>
</dbReference>
<dbReference type="RefSeq" id="NP_001019744.1">
    <property type="nucleotide sequence ID" value="NM_001024573.1"/>
</dbReference>
<dbReference type="SMR" id="Q58DI5"/>
<dbReference type="FunCoup" id="Q58DI5">
    <property type="interactions" value="852"/>
</dbReference>
<dbReference type="STRING" id="9913.ENSBTAP00000014674"/>
<dbReference type="PaxDb" id="9913-ENSBTAP00000014674"/>
<dbReference type="Ensembl" id="ENSBTAT00000014674.7">
    <property type="protein sequence ID" value="ENSBTAP00000014674.5"/>
    <property type="gene ID" value="ENSBTAG00000011050.7"/>
</dbReference>
<dbReference type="GeneID" id="541021"/>
<dbReference type="KEGG" id="bta:541021"/>
<dbReference type="CTD" id="403313"/>
<dbReference type="VEuPathDB" id="HostDB:ENSBTAG00000011050"/>
<dbReference type="VGNC" id="VGNC:33049">
    <property type="gene designation" value="PLPP6"/>
</dbReference>
<dbReference type="eggNOG" id="KOG4268">
    <property type="taxonomic scope" value="Eukaryota"/>
</dbReference>
<dbReference type="GeneTree" id="ENSGT00940000160907"/>
<dbReference type="HOGENOM" id="CLU_072573_4_0_1"/>
<dbReference type="InParanoid" id="Q58DI5"/>
<dbReference type="OMA" id="GTVYCLY"/>
<dbReference type="OrthoDB" id="5963614at2759"/>
<dbReference type="TreeFam" id="TF323272"/>
<dbReference type="Reactome" id="R-BTA-191273">
    <property type="pathway name" value="Cholesterol biosynthesis"/>
</dbReference>
<dbReference type="Proteomes" id="UP000009136">
    <property type="component" value="Chromosome 8"/>
</dbReference>
<dbReference type="Bgee" id="ENSBTAG00000011050">
    <property type="expression patterns" value="Expressed in oviduct epithelium and 107 other cell types or tissues"/>
</dbReference>
<dbReference type="GO" id="GO:0005789">
    <property type="term" value="C:endoplasmic reticulum membrane"/>
    <property type="evidence" value="ECO:0000250"/>
    <property type="project" value="UniProtKB"/>
</dbReference>
<dbReference type="GO" id="GO:0016020">
    <property type="term" value="C:membrane"/>
    <property type="evidence" value="ECO:0000318"/>
    <property type="project" value="GO_Central"/>
</dbReference>
<dbReference type="GO" id="GO:0005637">
    <property type="term" value="C:nuclear inner membrane"/>
    <property type="evidence" value="ECO:0007669"/>
    <property type="project" value="UniProtKB-SubCell"/>
</dbReference>
<dbReference type="GO" id="GO:0031965">
    <property type="term" value="C:nuclear membrane"/>
    <property type="evidence" value="ECO:0000250"/>
    <property type="project" value="UniProtKB"/>
</dbReference>
<dbReference type="GO" id="GO:0106405">
    <property type="term" value="F:isoprenoid diphosphate phosphatase activity"/>
    <property type="evidence" value="ECO:0007669"/>
    <property type="project" value="Ensembl"/>
</dbReference>
<dbReference type="GO" id="GO:0052642">
    <property type="term" value="F:lysophosphatidic acid phosphatase activity"/>
    <property type="evidence" value="ECO:0000250"/>
    <property type="project" value="UniProtKB"/>
</dbReference>
<dbReference type="GO" id="GO:0008195">
    <property type="term" value="F:phosphatidate phosphatase activity"/>
    <property type="evidence" value="ECO:0007669"/>
    <property type="project" value="Ensembl"/>
</dbReference>
<dbReference type="GO" id="GO:0042392">
    <property type="term" value="F:sphingosine-1-phosphate phosphatase activity"/>
    <property type="evidence" value="ECO:0000318"/>
    <property type="project" value="GO_Central"/>
</dbReference>
<dbReference type="GO" id="GO:0045339">
    <property type="term" value="P:farnesyl diphosphate catabolic process"/>
    <property type="evidence" value="ECO:0000250"/>
    <property type="project" value="UniProtKB"/>
</dbReference>
<dbReference type="GO" id="GO:0033383">
    <property type="term" value="P:geranyl diphosphate metabolic process"/>
    <property type="evidence" value="ECO:0000250"/>
    <property type="project" value="UniProtKB"/>
</dbReference>
<dbReference type="GO" id="GO:1902247">
    <property type="term" value="P:geranylgeranyl diphosphate catabolic process"/>
    <property type="evidence" value="ECO:0000250"/>
    <property type="project" value="UniProtKB"/>
</dbReference>
<dbReference type="GO" id="GO:0045087">
    <property type="term" value="P:innate immune response"/>
    <property type="evidence" value="ECO:0007669"/>
    <property type="project" value="UniProtKB-KW"/>
</dbReference>
<dbReference type="GO" id="GO:0006720">
    <property type="term" value="P:isoprenoid metabolic process"/>
    <property type="evidence" value="ECO:0000250"/>
    <property type="project" value="UniProtKB"/>
</dbReference>
<dbReference type="GO" id="GO:0046839">
    <property type="term" value="P:phospholipid dephosphorylation"/>
    <property type="evidence" value="ECO:0000318"/>
    <property type="project" value="GO_Central"/>
</dbReference>
<dbReference type="GO" id="GO:1902565">
    <property type="term" value="P:positive regulation of neutrophil activation"/>
    <property type="evidence" value="ECO:0000250"/>
    <property type="project" value="UniProtKB"/>
</dbReference>
<dbReference type="GO" id="GO:0018342">
    <property type="term" value="P:protein prenylation"/>
    <property type="evidence" value="ECO:0000250"/>
    <property type="project" value="UniProtKB"/>
</dbReference>
<dbReference type="CDD" id="cd03391">
    <property type="entry name" value="PAP2_containing_2_like"/>
    <property type="match status" value="1"/>
</dbReference>
<dbReference type="FunFam" id="1.20.144.10:FF:000020">
    <property type="entry name" value="phospholipid phosphatase 6"/>
    <property type="match status" value="1"/>
</dbReference>
<dbReference type="Gene3D" id="1.20.144.10">
    <property type="entry name" value="Phosphatidic acid phosphatase type 2/haloperoxidase"/>
    <property type="match status" value="1"/>
</dbReference>
<dbReference type="InterPro" id="IPR036938">
    <property type="entry name" value="P_Acid_Pase_2/haloperoxi_sf"/>
</dbReference>
<dbReference type="InterPro" id="IPR000326">
    <property type="entry name" value="P_Acid_Pase_2/haloperoxidase"/>
</dbReference>
<dbReference type="PANTHER" id="PTHR14969:SF18">
    <property type="entry name" value="POLYISOPRENOID DIPHOSPHATE_PHOSPHATE PHOSPHOHYDROLASE PLPP6"/>
    <property type="match status" value="1"/>
</dbReference>
<dbReference type="PANTHER" id="PTHR14969">
    <property type="entry name" value="SPHINGOSINE-1-PHOSPHATE PHOSPHOHYDROLASE"/>
    <property type="match status" value="1"/>
</dbReference>
<dbReference type="Pfam" id="PF01569">
    <property type="entry name" value="PAP2"/>
    <property type="match status" value="1"/>
</dbReference>
<dbReference type="SMART" id="SM00014">
    <property type="entry name" value="acidPPc"/>
    <property type="match status" value="1"/>
</dbReference>
<dbReference type="SUPFAM" id="SSF48317">
    <property type="entry name" value="Acid phosphatase/Vanadium-dependent haloperoxidase"/>
    <property type="match status" value="1"/>
</dbReference>
<reference key="1">
    <citation type="journal article" date="2005" name="BMC Genomics">
        <title>Characterization of 954 bovine full-CDS cDNA sequences.</title>
        <authorList>
            <person name="Harhay G.P."/>
            <person name="Sonstegard T.S."/>
            <person name="Keele J.W."/>
            <person name="Heaton M.P."/>
            <person name="Clawson M.L."/>
            <person name="Snelling W.M."/>
            <person name="Wiedmann R.T."/>
            <person name="Van Tassell C.P."/>
            <person name="Smith T.P.L."/>
        </authorList>
    </citation>
    <scope>NUCLEOTIDE SEQUENCE [LARGE SCALE MRNA]</scope>
</reference>
<reference key="2">
    <citation type="submission" date="2007-06" db="EMBL/GenBank/DDBJ databases">
        <authorList>
            <consortium name="NIH - Mammalian Gene Collection (MGC) project"/>
        </authorList>
    </citation>
    <scope>NUCLEOTIDE SEQUENCE [LARGE SCALE MRNA]</scope>
    <source>
        <strain>Hereford</strain>
        <tissue>Basal ganglia</tissue>
    </source>
</reference>
<proteinExistence type="evidence at transcript level"/>
<gene>
    <name evidence="2" type="primary">PLPP6</name>
</gene>
<sequence>MQSPRRNAEGRPLGTCDPSSSGSPAHGGGSRFEFQSLLSSRMPGADPTSARLRASESPVHRRGSFPLAGAGSSQALPPQLPEEDRIDLNPSFLGIALRSLLAIDLWLSKKLGVCAGESSSWGSMRPLMKLLEISGHGIPWLLGTLYCLSRSDSWAGREVLMNLLFALLLDLLLVSLIKGLVRRRRPAHNQMDMFFTISVDKYSFPSGHTTRAALVSRFILNHLVLAIPLRVLVVLWAFILGLSRVMLGRHNVTDVAFGFFLGYMQYSIVDYCWLSPRTAPVLFVLWNQP</sequence>
<protein>
    <recommendedName>
        <fullName evidence="6">Polyisoprenoid diphosphate/phosphate phosphohydrolase PLPP6</fullName>
        <ecNumber evidence="2">3.1.3.-</ecNumber>
        <ecNumber evidence="2">3.6.1.-</ecNumber>
        <ecNumber evidence="2">3.6.1.68</ecNumber>
    </recommendedName>
    <alternativeName>
        <fullName evidence="2">Phospholipid phosphatase 6</fullName>
    </alternativeName>
</protein>
<evidence type="ECO:0000250" key="1">
    <source>
        <dbReference type="UniProtKB" id="O34349"/>
    </source>
</evidence>
<evidence type="ECO:0000250" key="2">
    <source>
        <dbReference type="UniProtKB" id="Q8IY26"/>
    </source>
</evidence>
<evidence type="ECO:0000250" key="3">
    <source>
        <dbReference type="UniProtKB" id="Q9D4F2"/>
    </source>
</evidence>
<evidence type="ECO:0000255" key="4"/>
<evidence type="ECO:0000256" key="5">
    <source>
        <dbReference type="SAM" id="MobiDB-lite"/>
    </source>
</evidence>
<evidence type="ECO:0000305" key="6"/>
<comment type="function">
    <text evidence="2">Magnesium-independent polyisoprenoid diphosphatase that catalyzes the sequential dephosphorylation of presqualene, farnesyl, geranyl and geranylgeranyl diphosphates. Functions in the innate immune response through the dephosphorylation of presqualene diphosphate which acts as a potent inhibitor of the signaling pathways contributing to polymorphonuclear neutrophils activation. May regulate the biosynthesis of cholesterol and related sterols by dephosphorylating presqualene and farnesyl diphosphate, two key intermediates in this biosynthetic pathway. May also play a role in protein prenylation by acting on farnesyl diphosphate and its derivative geranylgeranyl diphosphate, two precursors for the addition of isoprenoid anchors to membrane proteins. Has a lower activity towards phosphatidic acid (PA), but through phosphatidic acid dephosphorylation may participate in the biosynthesis of phospholipids and triacylglycerols. May also act on ceramide-1-P, lysophosphatidic acid (LPA) and sphing-4-enine 1-phosphate/sphingosine-1-phosphate.</text>
</comment>
<comment type="catalytic activity">
    <reaction evidence="2">
        <text>presqualene diphosphate + H2O = presqualene phosphate + phosphate + H(+)</text>
        <dbReference type="Rhea" id="RHEA:67968"/>
        <dbReference type="ChEBI" id="CHEBI:15377"/>
        <dbReference type="ChEBI" id="CHEBI:15378"/>
        <dbReference type="ChEBI" id="CHEBI:43474"/>
        <dbReference type="ChEBI" id="CHEBI:57310"/>
        <dbReference type="ChEBI" id="CHEBI:176803"/>
    </reaction>
    <physiologicalReaction direction="left-to-right" evidence="2">
        <dbReference type="Rhea" id="RHEA:67969"/>
    </physiologicalReaction>
</comment>
<comment type="catalytic activity">
    <reaction evidence="2">
        <text>presqualene phosphate + H2O = presqualene alcohol + phosphate</text>
        <dbReference type="Rhea" id="RHEA:68024"/>
        <dbReference type="ChEBI" id="CHEBI:15377"/>
        <dbReference type="ChEBI" id="CHEBI:43474"/>
        <dbReference type="ChEBI" id="CHEBI:176803"/>
        <dbReference type="ChEBI" id="CHEBI:176962"/>
    </reaction>
    <physiologicalReaction direction="left-to-right" evidence="2">
        <dbReference type="Rhea" id="RHEA:68025"/>
    </physiologicalReaction>
</comment>
<comment type="catalytic activity">
    <reaction evidence="2">
        <text>(2E,6E)-farnesyl diphosphate + H2O = (2E,6E)-farnesyl phosphate + phosphate + H(+)</text>
        <dbReference type="Rhea" id="RHEA:48128"/>
        <dbReference type="ChEBI" id="CHEBI:15377"/>
        <dbReference type="ChEBI" id="CHEBI:15378"/>
        <dbReference type="ChEBI" id="CHEBI:43474"/>
        <dbReference type="ChEBI" id="CHEBI:88226"/>
        <dbReference type="ChEBI" id="CHEBI:175763"/>
    </reaction>
    <physiologicalReaction direction="left-to-right" evidence="2">
        <dbReference type="Rhea" id="RHEA:48129"/>
    </physiologicalReaction>
</comment>
<comment type="catalytic activity">
    <reaction evidence="2">
        <text>(2E,6E)-farnesyl phosphate + H2O = (2E,6E)-farnesol + phosphate</text>
        <dbReference type="Rhea" id="RHEA:48132"/>
        <dbReference type="ChEBI" id="CHEBI:15377"/>
        <dbReference type="ChEBI" id="CHEBI:16619"/>
        <dbReference type="ChEBI" id="CHEBI:43474"/>
        <dbReference type="ChEBI" id="CHEBI:88226"/>
    </reaction>
    <physiologicalReaction direction="left-to-right" evidence="2">
        <dbReference type="Rhea" id="RHEA:48133"/>
    </physiologicalReaction>
</comment>
<comment type="catalytic activity">
    <reaction evidence="2">
        <text>(2E,6E,10E)-geranylgeranyl diphosphate + H2O = (2E,6E,10E)-geranylgeranyl phosphate + phosphate + H(+)</text>
        <dbReference type="Rhea" id="RHEA:68008"/>
        <dbReference type="ChEBI" id="CHEBI:15377"/>
        <dbReference type="ChEBI" id="CHEBI:15378"/>
        <dbReference type="ChEBI" id="CHEBI:43474"/>
        <dbReference type="ChEBI" id="CHEBI:58756"/>
        <dbReference type="ChEBI" id="CHEBI:144936"/>
    </reaction>
    <physiologicalReaction direction="left-to-right" evidence="2">
        <dbReference type="Rhea" id="RHEA:68009"/>
    </physiologicalReaction>
</comment>
<comment type="catalytic activity">
    <reaction evidence="2">
        <text>(2E,6E,10E)-geranylgeranyl phosphate + H2O = (2E,6E,10E)-geranylgeraniol + phosphate</text>
        <dbReference type="Rhea" id="RHEA:68016"/>
        <dbReference type="ChEBI" id="CHEBI:15377"/>
        <dbReference type="ChEBI" id="CHEBI:43474"/>
        <dbReference type="ChEBI" id="CHEBI:46762"/>
        <dbReference type="ChEBI" id="CHEBI:144936"/>
    </reaction>
    <physiologicalReaction direction="left-to-right" evidence="2">
        <dbReference type="Rhea" id="RHEA:68017"/>
    </physiologicalReaction>
</comment>
<comment type="catalytic activity">
    <reaction evidence="2">
        <text>(2E)-geranyl diphosphate + H2O = (2E)-geranyl phosphate + phosphate + H(+)</text>
        <dbReference type="Rhea" id="RHEA:47944"/>
        <dbReference type="ChEBI" id="CHEBI:15377"/>
        <dbReference type="ChEBI" id="CHEBI:15378"/>
        <dbReference type="ChEBI" id="CHEBI:43474"/>
        <dbReference type="ChEBI" id="CHEBI:58057"/>
        <dbReference type="ChEBI" id="CHEBI:88107"/>
        <dbReference type="EC" id="3.6.1.68"/>
    </reaction>
    <physiologicalReaction direction="left-to-right" evidence="2">
        <dbReference type="Rhea" id="RHEA:47945"/>
    </physiologicalReaction>
</comment>
<comment type="catalytic activity">
    <reaction evidence="2">
        <text>(2E)-geranyl phosphate + H2O = (2E)-geraniol + phosphate</text>
        <dbReference type="Rhea" id="RHEA:68020"/>
        <dbReference type="ChEBI" id="CHEBI:15377"/>
        <dbReference type="ChEBI" id="CHEBI:17447"/>
        <dbReference type="ChEBI" id="CHEBI:43474"/>
        <dbReference type="ChEBI" id="CHEBI:88107"/>
    </reaction>
    <physiologicalReaction direction="left-to-right" evidence="2">
        <dbReference type="Rhea" id="RHEA:68021"/>
    </physiologicalReaction>
</comment>
<comment type="catalytic activity">
    <reaction evidence="2">
        <text>1,2-dihexadecanoyl-sn-glycero-3-phosphate + H2O = 1,2-dihexadecanoyl-sn-glycerol + phosphate</text>
        <dbReference type="Rhea" id="RHEA:43236"/>
        <dbReference type="ChEBI" id="CHEBI:15377"/>
        <dbReference type="ChEBI" id="CHEBI:43474"/>
        <dbReference type="ChEBI" id="CHEBI:72859"/>
        <dbReference type="ChEBI" id="CHEBI:82929"/>
    </reaction>
    <physiologicalReaction direction="left-to-right" evidence="2">
        <dbReference type="Rhea" id="RHEA:43237"/>
    </physiologicalReaction>
</comment>
<comment type="subcellular location">
    <subcellularLocation>
        <location evidence="2">Endoplasmic reticulum membrane</location>
        <topology evidence="2">Multi-pass membrane protein</topology>
    </subcellularLocation>
    <subcellularLocation>
        <location evidence="2">Nucleus envelope</location>
    </subcellularLocation>
    <subcellularLocation>
        <location evidence="2">Nucleus inner membrane</location>
    </subcellularLocation>
</comment>
<comment type="PTM">
    <text evidence="2">Phosphorylation by PKC activates the phosphatase activity towards presqualene diphosphate.</text>
</comment>
<comment type="similarity">
    <text evidence="6">Belongs to the PA-phosphatase related phosphoesterase family.</text>
</comment>
<organism>
    <name type="scientific">Bos taurus</name>
    <name type="common">Bovine</name>
    <dbReference type="NCBI Taxonomy" id="9913"/>
    <lineage>
        <taxon>Eukaryota</taxon>
        <taxon>Metazoa</taxon>
        <taxon>Chordata</taxon>
        <taxon>Craniata</taxon>
        <taxon>Vertebrata</taxon>
        <taxon>Euteleostomi</taxon>
        <taxon>Mammalia</taxon>
        <taxon>Eutheria</taxon>
        <taxon>Laurasiatheria</taxon>
        <taxon>Artiodactyla</taxon>
        <taxon>Ruminantia</taxon>
        <taxon>Pecora</taxon>
        <taxon>Bovidae</taxon>
        <taxon>Bovinae</taxon>
        <taxon>Bos</taxon>
    </lineage>
</organism>
<keyword id="KW-0256">Endoplasmic reticulum</keyword>
<keyword id="KW-0378">Hydrolase</keyword>
<keyword id="KW-0391">Immunity</keyword>
<keyword id="KW-0399">Innate immunity</keyword>
<keyword id="KW-0443">Lipid metabolism</keyword>
<keyword id="KW-0472">Membrane</keyword>
<keyword id="KW-0539">Nucleus</keyword>
<keyword id="KW-0597">Phosphoprotein</keyword>
<keyword id="KW-1185">Reference proteome</keyword>
<keyword id="KW-0812">Transmembrane</keyword>
<keyword id="KW-1133">Transmembrane helix</keyword>
<feature type="chain" id="PRO_0000239395" description="Polyisoprenoid diphosphate/phosphate phosphohydrolase PLPP6">
    <location>
        <begin position="1"/>
        <end position="289"/>
    </location>
</feature>
<feature type="topological domain" description="Cytoplasmic" evidence="2">
    <location>
        <begin position="1"/>
        <end position="126"/>
    </location>
</feature>
<feature type="transmembrane region" description="Helical" evidence="4">
    <location>
        <begin position="127"/>
        <end position="147"/>
    </location>
</feature>
<feature type="topological domain" description="Lumenal" evidence="2">
    <location>
        <begin position="148"/>
        <end position="158"/>
    </location>
</feature>
<feature type="transmembrane region" description="Helical" evidence="4">
    <location>
        <begin position="159"/>
        <end position="179"/>
    </location>
</feature>
<feature type="topological domain" description="Cytoplasmic" evidence="2">
    <location>
        <begin position="180"/>
        <end position="222"/>
    </location>
</feature>
<feature type="transmembrane region" description="Helical" evidence="4">
    <location>
        <begin position="223"/>
        <end position="243"/>
    </location>
</feature>
<feature type="topological domain" description="Lumenal" evidence="2">
    <location>
        <begin position="244"/>
        <end position="254"/>
    </location>
</feature>
<feature type="transmembrane region" description="Helical" evidence="4">
    <location>
        <begin position="255"/>
        <end position="275"/>
    </location>
</feature>
<feature type="topological domain" description="Cytoplasmic" evidence="2">
    <location>
        <begin position="276"/>
        <end position="289"/>
    </location>
</feature>
<feature type="region of interest" description="Disordered" evidence="5">
    <location>
        <begin position="1"/>
        <end position="81"/>
    </location>
</feature>
<feature type="region of interest" description="Phosphatase sequence motif I" evidence="1">
    <location>
        <begin position="178"/>
        <end position="186"/>
    </location>
</feature>
<feature type="region of interest" description="Phosphatase sequence motif II" evidence="1">
    <location>
        <begin position="205"/>
        <end position="208"/>
    </location>
</feature>
<feature type="region of interest" description="Phosphatase sequence motif III" evidence="1">
    <location>
        <begin position="243"/>
        <end position="254"/>
    </location>
</feature>
<feature type="active site" description="Proton donors" evidence="1">
    <location>
        <position position="208"/>
    </location>
</feature>
<feature type="active site" description="Nucleophile" evidence="1">
    <location>
        <position position="250"/>
    </location>
</feature>
<feature type="site" description="Stabilizes the active site histidine for nucleophilic attack" evidence="1">
    <location>
        <position position="254"/>
    </location>
</feature>
<feature type="modified residue" description="Phosphoserine" evidence="2">
    <location>
        <position position="23"/>
    </location>
</feature>
<feature type="modified residue" description="Phosphoserine" evidence="2">
    <location>
        <position position="30"/>
    </location>
</feature>
<feature type="modified residue" description="Phosphoserine" evidence="3">
    <location>
        <position position="64"/>
    </location>
</feature>